<sequence>MATEHVNGNGTEEPMDTTSAVIHSENFQTLLDAGLPQKVAEKLDEIYVAGLVAHSDLDERAIEALKEFNEDGALAVLQQFKDSDLSHVQNKSAFLCGVMKTYRQREKQGTKVADSSKGPDEAKIKALLERTGYTLDVTTGQRKYGGPPPDSVYSGQQPSVGTEIFVGKIPRDLFEDELVPLFEKAGPIWDLRLMMDPLTGLNRGYAFVTFCTKEAAQEAVKLYNNHEIRSGKHIGVCISVANNRLFVGSIPKSKTKEQILEEFSKVTEGLTDVILYHQPDDKKKNRGFCFLEYEDHKTAAQARRRLMSGKVKVWGNVGTVEWADPIEDPDPEVMAKVKVLFVRNLANTVTEEILEKAFSQFGKLERVKKLKDYAFIHFDERDGAVKAMEEMNGKDLEGENIEIVFAKPPDQKRKERKAQRQAAKNQMYDDYYYYGPPHMPPPTRGRGRGGRGGYGYPPDYYGYEDYYDYYGYDYHNYRGGYEDPYYGYEDFQVGARGRGGRGARGAAPSRGRGAAPPRGRAGYSQRGGPGSARGVRGARGGAQQQRGRGVRGARGGRGGNVGGKRKADGYNQPDSKRRQTNNQNWGSQPIAQQPLQGGDHSGNYGYKSENQEFYQDTFGQQWK</sequence>
<proteinExistence type="evidence at protein level"/>
<organism>
    <name type="scientific">Homo sapiens</name>
    <name type="common">Human</name>
    <dbReference type="NCBI Taxonomy" id="9606"/>
    <lineage>
        <taxon>Eukaryota</taxon>
        <taxon>Metazoa</taxon>
        <taxon>Chordata</taxon>
        <taxon>Craniata</taxon>
        <taxon>Vertebrata</taxon>
        <taxon>Euteleostomi</taxon>
        <taxon>Mammalia</taxon>
        <taxon>Eutheria</taxon>
        <taxon>Euarchontoglires</taxon>
        <taxon>Primates</taxon>
        <taxon>Haplorrhini</taxon>
        <taxon>Catarrhini</taxon>
        <taxon>Hominidae</taxon>
        <taxon>Homo</taxon>
    </lineage>
</organism>
<protein>
    <recommendedName>
        <fullName>Heterogeneous nuclear ribonucleoprotein Q</fullName>
        <shortName>hnRNP Q</shortName>
    </recommendedName>
    <alternativeName>
        <fullName>Glycine- and tyrosine-rich RNA-binding protein</fullName>
        <shortName>GRY-RBP</shortName>
    </alternativeName>
    <alternativeName>
        <fullName>NS1-associated protein 1</fullName>
    </alternativeName>
    <alternativeName>
        <fullName>Synaptotagmin-binding, cytoplasmic RNA-interacting protein</fullName>
    </alternativeName>
</protein>
<keyword id="KW-0002">3D-structure</keyword>
<keyword id="KW-0007">Acetylation</keyword>
<keyword id="KW-0025">Alternative splicing</keyword>
<keyword id="KW-0963">Cytoplasm</keyword>
<keyword id="KW-0903">Direct protein sequencing</keyword>
<keyword id="KW-0256">Endoplasmic reticulum</keyword>
<keyword id="KW-0945">Host-virus interaction</keyword>
<keyword id="KW-1017">Isopeptide bond</keyword>
<keyword id="KW-0488">Methylation</keyword>
<keyword id="KW-0492">Microsome</keyword>
<keyword id="KW-0507">mRNA processing</keyword>
<keyword id="KW-0508">mRNA splicing</keyword>
<keyword id="KW-0539">Nucleus</keyword>
<keyword id="KW-0597">Phosphoprotein</keyword>
<keyword id="KW-1267">Proteomics identification</keyword>
<keyword id="KW-1185">Reference proteome</keyword>
<keyword id="KW-0677">Repeat</keyword>
<keyword id="KW-0687">Ribonucleoprotein</keyword>
<keyword id="KW-0694">RNA-binding</keyword>
<keyword id="KW-0747">Spliceosome</keyword>
<keyword id="KW-0810">Translation regulation</keyword>
<keyword id="KW-0832">Ubl conjugation</keyword>
<evidence type="ECO:0000250" key="1"/>
<evidence type="ECO:0000250" key="2">
    <source>
        <dbReference type="UniProtKB" id="O43390"/>
    </source>
</evidence>
<evidence type="ECO:0000250" key="3">
    <source>
        <dbReference type="UniProtKB" id="Q7TMK9"/>
    </source>
</evidence>
<evidence type="ECO:0000255" key="4"/>
<evidence type="ECO:0000255" key="5">
    <source>
        <dbReference type="PROSITE-ProRule" id="PRU00176"/>
    </source>
</evidence>
<evidence type="ECO:0000256" key="6">
    <source>
        <dbReference type="SAM" id="MobiDB-lite"/>
    </source>
</evidence>
<evidence type="ECO:0000269" key="7">
    <source>
    </source>
</evidence>
<evidence type="ECO:0000269" key="8">
    <source>
    </source>
</evidence>
<evidence type="ECO:0000269" key="9">
    <source>
    </source>
</evidence>
<evidence type="ECO:0000269" key="10">
    <source>
    </source>
</evidence>
<evidence type="ECO:0000269" key="11">
    <source>
    </source>
</evidence>
<evidence type="ECO:0000269" key="12">
    <source>
    </source>
</evidence>
<evidence type="ECO:0000269" key="13">
    <source>
    </source>
</evidence>
<evidence type="ECO:0000269" key="14">
    <source>
    </source>
</evidence>
<evidence type="ECO:0000269" key="15">
    <source>
    </source>
</evidence>
<evidence type="ECO:0000269" key="16">
    <source>
    </source>
</evidence>
<evidence type="ECO:0000269" key="17">
    <source>
    </source>
</evidence>
<evidence type="ECO:0000269" key="18">
    <source>
    </source>
</evidence>
<evidence type="ECO:0000269" key="19">
    <source>
    </source>
</evidence>
<evidence type="ECO:0000269" key="20">
    <source>
    </source>
</evidence>
<evidence type="ECO:0000269" key="21">
    <source>
    </source>
</evidence>
<evidence type="ECO:0000269" key="22">
    <source>
    </source>
</evidence>
<evidence type="ECO:0000269" key="23">
    <source>
    </source>
</evidence>
<evidence type="ECO:0000269" key="24">
    <source>
    </source>
</evidence>
<evidence type="ECO:0000303" key="25">
    <source>
    </source>
</evidence>
<evidence type="ECO:0000303" key="26">
    <source>
    </source>
</evidence>
<evidence type="ECO:0000303" key="27">
    <source>
    </source>
</evidence>
<evidence type="ECO:0000305" key="28"/>
<evidence type="ECO:0007744" key="29">
    <source>
    </source>
</evidence>
<evidence type="ECO:0007744" key="30">
    <source>
    </source>
</evidence>
<evidence type="ECO:0007744" key="31">
    <source>
    </source>
</evidence>
<evidence type="ECO:0007744" key="32">
    <source>
    </source>
</evidence>
<evidence type="ECO:0007744" key="33">
    <source>
    </source>
</evidence>
<evidence type="ECO:0007829" key="34">
    <source>
        <dbReference type="PDB" id="2DGU"/>
    </source>
</evidence>
<evidence type="ECO:0007829" key="35">
    <source>
        <dbReference type="PDB" id="2MXT"/>
    </source>
</evidence>
<evidence type="ECO:0007829" key="36">
    <source>
        <dbReference type="PDB" id="6KOR"/>
    </source>
</evidence>
<gene>
    <name type="primary">SYNCRIP</name>
    <name type="synonym">HNRPQ</name>
    <name type="synonym">NSAP1</name>
</gene>
<reference key="1">
    <citation type="journal article" date="1999" name="J. Virol.">
        <title>A novel heterogeneous nuclear ribonucleoprotein-like protein interacts with NS1 of the minute virus of mice.</title>
        <authorList>
            <person name="Harris C.E."/>
            <person name="Boden R.A."/>
            <person name="Astell C.R."/>
        </authorList>
    </citation>
    <scope>NUCLEOTIDE SEQUENCE [MRNA] (ISOFORM 3)</scope>
    <scope>INTERACTION WITH MINUTE VIRUS OF MICE NS1 (MICROBIAL INFECTION)</scope>
    <source>
        <tissue>Cervix carcinoma</tissue>
    </source>
</reference>
<reference key="2">
    <citation type="journal article" date="2000" name="Chin. Sci. Bull.">
        <title>Cloning of human and mouse GRY-RBP cDNA.</title>
        <authorList>
            <person name="Du G."/>
            <person name="Pan M."/>
            <person name="Zhou Y."/>
            <person name="Chen J."/>
            <person name="Yao H."/>
            <person name="Yuan J."/>
            <person name="Qiang B."/>
        </authorList>
    </citation>
    <scope>NUCLEOTIDE SEQUENCE [MRNA] (ISOFORM 1)</scope>
</reference>
<reference key="3">
    <citation type="journal article" date="2001" name="EMBO J.">
        <title>SMN interacts with a novel family of hnRNP and spliceosomal proteins.</title>
        <authorList>
            <person name="Mourelatos Z."/>
            <person name="Abel L."/>
            <person name="Yong J."/>
            <person name="Kataoka N."/>
            <person name="Dreyfuss G."/>
        </authorList>
    </citation>
    <scope>NUCLEOTIDE SEQUENCE [MRNA] (ISOFORMS 1; 2 AND 3)</scope>
    <scope>FUNCTION IN MRNA PROCESSING</scope>
    <scope>SUBCELLULAR LOCATION</scope>
    <scope>ASSOCIATION WITH THE SPLICEOSOME</scope>
    <scope>INTERACTION WITH SMN AND HNRPR</scope>
    <source>
        <tissue>Cervix carcinoma</tissue>
    </source>
</reference>
<reference key="4">
    <citation type="submission" date="2005-04" db="EMBL/GenBank/DDBJ databases">
        <authorList>
            <person name="Suzuki Y."/>
            <person name="Sugano S."/>
            <person name="Totoki Y."/>
            <person name="Toyoda A."/>
            <person name="Takeda T."/>
            <person name="Sakaki Y."/>
            <person name="Tanaka A."/>
            <person name="Yokoyama S."/>
        </authorList>
    </citation>
    <scope>NUCLEOTIDE SEQUENCE [LARGE SCALE MRNA] (ISOFORM 1)</scope>
    <source>
        <tissue>Liver</tissue>
    </source>
</reference>
<reference key="5">
    <citation type="journal article" date="2003" name="Nature">
        <title>The DNA sequence and analysis of human chromosome 6.</title>
        <authorList>
            <person name="Mungall A.J."/>
            <person name="Palmer S.A."/>
            <person name="Sims S.K."/>
            <person name="Edwards C.A."/>
            <person name="Ashurst J.L."/>
            <person name="Wilming L."/>
            <person name="Jones M.C."/>
            <person name="Horton R."/>
            <person name="Hunt S.E."/>
            <person name="Scott C.E."/>
            <person name="Gilbert J.G.R."/>
            <person name="Clamp M.E."/>
            <person name="Bethel G."/>
            <person name="Milne S."/>
            <person name="Ainscough R."/>
            <person name="Almeida J.P."/>
            <person name="Ambrose K.D."/>
            <person name="Andrews T.D."/>
            <person name="Ashwell R.I.S."/>
            <person name="Babbage A.K."/>
            <person name="Bagguley C.L."/>
            <person name="Bailey J."/>
            <person name="Banerjee R."/>
            <person name="Barker D.J."/>
            <person name="Barlow K.F."/>
            <person name="Bates K."/>
            <person name="Beare D.M."/>
            <person name="Beasley H."/>
            <person name="Beasley O."/>
            <person name="Bird C.P."/>
            <person name="Blakey S.E."/>
            <person name="Bray-Allen S."/>
            <person name="Brook J."/>
            <person name="Brown A.J."/>
            <person name="Brown J.Y."/>
            <person name="Burford D.C."/>
            <person name="Burrill W."/>
            <person name="Burton J."/>
            <person name="Carder C."/>
            <person name="Carter N.P."/>
            <person name="Chapman J.C."/>
            <person name="Clark S.Y."/>
            <person name="Clark G."/>
            <person name="Clee C.M."/>
            <person name="Clegg S."/>
            <person name="Cobley V."/>
            <person name="Collier R.E."/>
            <person name="Collins J.E."/>
            <person name="Colman L.K."/>
            <person name="Corby N.R."/>
            <person name="Coville G.J."/>
            <person name="Culley K.M."/>
            <person name="Dhami P."/>
            <person name="Davies J."/>
            <person name="Dunn M."/>
            <person name="Earthrowl M.E."/>
            <person name="Ellington A.E."/>
            <person name="Evans K.A."/>
            <person name="Faulkner L."/>
            <person name="Francis M.D."/>
            <person name="Frankish A."/>
            <person name="Frankland J."/>
            <person name="French L."/>
            <person name="Garner P."/>
            <person name="Garnett J."/>
            <person name="Ghori M.J."/>
            <person name="Gilby L.M."/>
            <person name="Gillson C.J."/>
            <person name="Glithero R.J."/>
            <person name="Grafham D.V."/>
            <person name="Grant M."/>
            <person name="Gribble S."/>
            <person name="Griffiths C."/>
            <person name="Griffiths M.N.D."/>
            <person name="Hall R."/>
            <person name="Halls K.S."/>
            <person name="Hammond S."/>
            <person name="Harley J.L."/>
            <person name="Hart E.A."/>
            <person name="Heath P.D."/>
            <person name="Heathcott R."/>
            <person name="Holmes S.J."/>
            <person name="Howden P.J."/>
            <person name="Howe K.L."/>
            <person name="Howell G.R."/>
            <person name="Huckle E."/>
            <person name="Humphray S.J."/>
            <person name="Humphries M.D."/>
            <person name="Hunt A.R."/>
            <person name="Johnson C.M."/>
            <person name="Joy A.A."/>
            <person name="Kay M."/>
            <person name="Keenan S.J."/>
            <person name="Kimberley A.M."/>
            <person name="King A."/>
            <person name="Laird G.K."/>
            <person name="Langford C."/>
            <person name="Lawlor S."/>
            <person name="Leongamornlert D.A."/>
            <person name="Leversha M."/>
            <person name="Lloyd C.R."/>
            <person name="Lloyd D.M."/>
            <person name="Loveland J.E."/>
            <person name="Lovell J."/>
            <person name="Martin S."/>
            <person name="Mashreghi-Mohammadi M."/>
            <person name="Maslen G.L."/>
            <person name="Matthews L."/>
            <person name="McCann O.T."/>
            <person name="McLaren S.J."/>
            <person name="McLay K."/>
            <person name="McMurray A."/>
            <person name="Moore M.J.F."/>
            <person name="Mullikin J.C."/>
            <person name="Niblett D."/>
            <person name="Nickerson T."/>
            <person name="Novik K.L."/>
            <person name="Oliver K."/>
            <person name="Overton-Larty E.K."/>
            <person name="Parker A."/>
            <person name="Patel R."/>
            <person name="Pearce A.V."/>
            <person name="Peck A.I."/>
            <person name="Phillimore B.J.C.T."/>
            <person name="Phillips S."/>
            <person name="Plumb R.W."/>
            <person name="Porter K.M."/>
            <person name="Ramsey Y."/>
            <person name="Ranby S.A."/>
            <person name="Rice C.M."/>
            <person name="Ross M.T."/>
            <person name="Searle S.M."/>
            <person name="Sehra H.K."/>
            <person name="Sheridan E."/>
            <person name="Skuce C.D."/>
            <person name="Smith S."/>
            <person name="Smith M."/>
            <person name="Spraggon L."/>
            <person name="Squares S.L."/>
            <person name="Steward C.A."/>
            <person name="Sycamore N."/>
            <person name="Tamlyn-Hall G."/>
            <person name="Tester J."/>
            <person name="Theaker A.J."/>
            <person name="Thomas D.W."/>
            <person name="Thorpe A."/>
            <person name="Tracey A."/>
            <person name="Tromans A."/>
            <person name="Tubby B."/>
            <person name="Wall M."/>
            <person name="Wallis J.M."/>
            <person name="West A.P."/>
            <person name="White S.S."/>
            <person name="Whitehead S.L."/>
            <person name="Whittaker H."/>
            <person name="Wild A."/>
            <person name="Willey D.J."/>
            <person name="Wilmer T.E."/>
            <person name="Wood J.M."/>
            <person name="Wray P.W."/>
            <person name="Wyatt J.C."/>
            <person name="Young L."/>
            <person name="Younger R.M."/>
            <person name="Bentley D.R."/>
            <person name="Coulson A."/>
            <person name="Durbin R.M."/>
            <person name="Hubbard T."/>
            <person name="Sulston J.E."/>
            <person name="Dunham I."/>
            <person name="Rogers J."/>
            <person name="Beck S."/>
        </authorList>
    </citation>
    <scope>NUCLEOTIDE SEQUENCE [LARGE SCALE GENOMIC DNA]</scope>
</reference>
<reference key="6">
    <citation type="submission" date="2005-09" db="EMBL/GenBank/DDBJ databases">
        <authorList>
            <person name="Mural R.J."/>
            <person name="Istrail S."/>
            <person name="Sutton G.G."/>
            <person name="Florea L."/>
            <person name="Halpern A.L."/>
            <person name="Mobarry C.M."/>
            <person name="Lippert R."/>
            <person name="Walenz B."/>
            <person name="Shatkay H."/>
            <person name="Dew I."/>
            <person name="Miller J.R."/>
            <person name="Flanigan M.J."/>
            <person name="Edwards N.J."/>
            <person name="Bolanos R."/>
            <person name="Fasulo D."/>
            <person name="Halldorsson B.V."/>
            <person name="Hannenhalli S."/>
            <person name="Turner R."/>
            <person name="Yooseph S."/>
            <person name="Lu F."/>
            <person name="Nusskern D.R."/>
            <person name="Shue B.C."/>
            <person name="Zheng X.H."/>
            <person name="Zhong F."/>
            <person name="Delcher A.L."/>
            <person name="Huson D.H."/>
            <person name="Kravitz S.A."/>
            <person name="Mouchard L."/>
            <person name="Reinert K."/>
            <person name="Remington K.A."/>
            <person name="Clark A.G."/>
            <person name="Waterman M.S."/>
            <person name="Eichler E.E."/>
            <person name="Adams M.D."/>
            <person name="Hunkapiller M.W."/>
            <person name="Myers E.W."/>
            <person name="Venter J.C."/>
        </authorList>
    </citation>
    <scope>NUCLEOTIDE SEQUENCE [LARGE SCALE GENOMIC DNA]</scope>
</reference>
<reference key="7">
    <citation type="journal article" date="2004" name="Genome Res.">
        <title>The status, quality, and expansion of the NIH full-length cDNA project: the Mammalian Gene Collection (MGC).</title>
        <authorList>
            <consortium name="The MGC Project Team"/>
        </authorList>
    </citation>
    <scope>NUCLEOTIDE SEQUENCE [LARGE SCALE MRNA] (ISOFORMS 1/3; 4 AND 5)</scope>
    <source>
        <tissue>Eye</tissue>
        <tissue>Lung</tissue>
        <tissue>Urinary bladder</tissue>
    </source>
</reference>
<reference key="8">
    <citation type="submission" date="2007-03" db="UniProtKB">
        <authorList>
            <person name="Lubec G."/>
            <person name="Vishwanath V."/>
        </authorList>
    </citation>
    <scope>PROTEIN SEQUENCE OF 43-60 AND 370-381</scope>
    <scope>IDENTIFICATION BY MASS SPECTROMETRY</scope>
    <source>
        <tissue>Brain</tissue>
        <tissue>Cajal-Retzius cell</tissue>
    </source>
</reference>
<reference key="9">
    <citation type="journal article" date="2003" name="Mol. Cell. Proteomics">
        <title>Signaling initiated by overexpression of the fibroblast growth factor receptor-1 investigated by mass spectrometry.</title>
        <authorList>
            <person name="Hinsby A.M."/>
            <person name="Olsen J.V."/>
            <person name="Bennett K.L."/>
            <person name="Mann M."/>
        </authorList>
    </citation>
    <scope>PARTIAL PROTEIN SEQUENCE</scope>
    <scope>IDENTIFICATION BY MASS SPECTROMETRY</scope>
    <scope>PHOSPHORYLATION AT TYR-373</scope>
    <source>
        <tissue>Kidney</tissue>
    </source>
</reference>
<reference key="10">
    <citation type="journal article" date="2000" name="Cell">
        <title>A mechanism for translationally coupled mRNA turnover: interaction between the poly(A) tail and a c-fos RNA coding determinant via a protein complex.</title>
        <authorList>
            <person name="Grosset C."/>
            <person name="Chen C.-Y.A."/>
            <person name="Xu N."/>
            <person name="Sonenberg N."/>
            <person name="Jacquemin-Sablon H."/>
            <person name="Shyu A.-B."/>
        </authorList>
    </citation>
    <scope>FUNCTION IN TRANSLATIONALLY COUPLED MRNA TURNOVER</scope>
    <scope>IDENTIFICATION IN A COMPLEX WITH HNRPD; PABPC1; PAIP1 AND CSDE1</scope>
    <source>
        <tissue>Placenta</tissue>
    </source>
</reference>
<reference key="11">
    <citation type="journal article" date="2001" name="Biochem. Biophys. Res. Commun.">
        <title>Two-hybrid cloning identifies an RNA-binding protein, GRY-RBP, as a component of apobec-1 editosome.</title>
        <authorList>
            <person name="Lau P.P."/>
            <person name="Chang B.-H."/>
            <person name="Chan L."/>
        </authorList>
    </citation>
    <scope>FUNCTION IN APOB MRNA EDITING</scope>
    <scope>INTERACTION WITH APOBEC1</scope>
    <scope>TISSUE SPECIFICITY</scope>
</reference>
<reference key="12">
    <citation type="journal article" date="2001" name="J. Biol. Chem.">
        <title>Identification of GRY-RBP as an apolipoprotein B RNA-binding protein that interacts with both apobec-1 and apobec-1 complementation factor to modulate C to U editing.</title>
        <authorList>
            <person name="Blanc V."/>
            <person name="Navaratnam N."/>
            <person name="Henderson J.O."/>
            <person name="Anant S."/>
            <person name="Kennedy S."/>
            <person name="Jarmuz A."/>
            <person name="Scott J."/>
            <person name="Davidson N.O."/>
        </authorList>
    </citation>
    <scope>FUNCTION IN APOB MRNA EDITING</scope>
    <scope>RNA-BINDING</scope>
    <scope>INTERACTION WITH A1CF AND APOBEC1</scope>
</reference>
<reference key="13">
    <citation type="journal article" date="1998" name="Nat. Genet.">
        <title>Mass spectrometry and EST-database searching allows characterization of the multi-protein spliceosome complex.</title>
        <authorList>
            <person name="Neubauer G."/>
            <person name="King A."/>
            <person name="Rappsilber J."/>
            <person name="Calvio C."/>
            <person name="Watson M."/>
            <person name="Ajuh P."/>
            <person name="Sleeman J."/>
            <person name="Lamond A.I."/>
            <person name="Mann M."/>
        </authorList>
    </citation>
    <scope>IDENTIFICATION IN SPLICEOSOME</scope>
</reference>
<reference key="14">
    <citation type="journal article" date="2002" name="Mol. Cell. Proteomics">
        <title>Hyperphosphorylated C-terminal repeat domain-associating proteins in the nuclear proteome link transcription to DNA/chromatin modification and RNA processing.</title>
        <authorList>
            <person name="Carty S.M."/>
            <person name="Greenleaf A.L."/>
        </authorList>
    </citation>
    <scope>INTERACTION WITH POLR2A</scope>
</reference>
<reference key="15">
    <citation type="journal article" date="2002" name="RNA">
        <title>Purification and characterization of native spliceosomes suitable for three-dimensional structural analysis.</title>
        <authorList>
            <person name="Jurica M.S."/>
            <person name="Licklider L.J."/>
            <person name="Gygi S.P."/>
            <person name="Grigorieff N."/>
            <person name="Moore M.J."/>
        </authorList>
    </citation>
    <scope>IDENTIFICATION BY MASS SPECTROMETRY</scope>
    <scope>IDENTIFICATION IN THE SPLICEOSOMAL C COMPLEX</scope>
</reference>
<reference key="16">
    <citation type="journal article" date="2004" name="Cell">
        <title>Noncanonical function of glutamyl-prolyl-tRNA synthetase: gene-specific silencing of translation.</title>
        <authorList>
            <person name="Sampath P."/>
            <person name="Mazumder B."/>
            <person name="Seshadri V."/>
            <person name="Gerber C.A."/>
            <person name="Chavatte L."/>
            <person name="Kinter M."/>
            <person name="Ting S.M."/>
            <person name="Dignam J.D."/>
            <person name="Kim S."/>
            <person name="Driscoll D.M."/>
            <person name="Fox P.L."/>
        </authorList>
    </citation>
    <scope>IDENTIFICATION IN THE GAIT COMPLEX</scope>
</reference>
<reference key="17">
    <citation type="journal article" date="2006" name="Biochem. Biophys. Res. Commun.">
        <title>The methylation of the C-terminal region of hnRNPQ (NSAP1) is important for its nuclear localization.</title>
        <authorList>
            <person name="Passos D.O."/>
            <person name="Quaresma A.J."/>
            <person name="Kobarg J."/>
        </authorList>
    </citation>
    <scope>METHYLATION BY PRMT1</scope>
</reference>
<reference key="18">
    <citation type="journal article" date="2007" name="Mol. Cell. Proteomics">
        <title>Molecular composition of IMP1 ribonucleoprotein granules.</title>
        <authorList>
            <person name="Joeson L."/>
            <person name="Vikesaa J."/>
            <person name="Krogh A."/>
            <person name="Nielsen L.K."/>
            <person name="Hansen T."/>
            <person name="Borup R."/>
            <person name="Johnsen A.H."/>
            <person name="Christiansen J."/>
            <person name="Nielsen F.C."/>
        </authorList>
    </citation>
    <scope>IDENTIFICATION IN A MRNP GRANULE COMPLEX</scope>
    <scope>SUBCELLULAR LOCATION</scope>
    <scope>IDENTIFICATION BY MASS SPECTROMETRY</scope>
</reference>
<reference key="19">
    <citation type="journal article" date="2007" name="Science">
        <title>ATM and ATR substrate analysis reveals extensive protein networks responsive to DNA damage.</title>
        <authorList>
            <person name="Matsuoka S."/>
            <person name="Ballif B.A."/>
            <person name="Smogorzewska A."/>
            <person name="McDonald E.R. III"/>
            <person name="Hurov K.E."/>
            <person name="Luo J."/>
            <person name="Bakalarski C.E."/>
            <person name="Zhao Z."/>
            <person name="Solimini N."/>
            <person name="Lerenthal Y."/>
            <person name="Shiloh Y."/>
            <person name="Gygi S.P."/>
            <person name="Elledge S.J."/>
        </authorList>
    </citation>
    <scope>PHOSPHORYLATION [LARGE SCALE ANALYSIS] AT SER-587</scope>
    <scope>IDENTIFICATION BY MASS SPECTROMETRY [LARGE SCALE ANALYSIS]</scope>
    <source>
        <tissue>Embryonic kidney</tissue>
    </source>
</reference>
<reference key="20">
    <citation type="journal article" date="2009" name="Anal. Chem.">
        <title>Lys-N and trypsin cover complementary parts of the phosphoproteome in a refined SCX-based approach.</title>
        <authorList>
            <person name="Gauci S."/>
            <person name="Helbig A.O."/>
            <person name="Slijper M."/>
            <person name="Krijgsveld J."/>
            <person name="Heck A.J."/>
            <person name="Mohammed S."/>
        </authorList>
    </citation>
    <scope>ACETYLATION [LARGE SCALE ANALYSIS] AT ALA-2</scope>
    <scope>CLEAVAGE OF INITIATOR METHIONINE [LARGE SCALE ANALYSIS]</scope>
    <scope>IDENTIFICATION BY MASS SPECTROMETRY [LARGE SCALE ANALYSIS]</scope>
</reference>
<reference key="21">
    <citation type="journal article" date="2009" name="FEBS J.">
        <title>Functional association of human Ki-1/57 with pre-mRNA splicing events.</title>
        <authorList>
            <person name="Bressan G.C."/>
            <person name="Quaresma A.J."/>
            <person name="Moraes E.C."/>
            <person name="Manfiolli A.O."/>
            <person name="Passos D.O."/>
            <person name="Gomes M.D."/>
            <person name="Kobarg J."/>
        </authorList>
    </citation>
    <scope>INTERACTION WITH HABP4</scope>
</reference>
<reference key="22">
    <citation type="journal article" date="2009" name="Mol. Cell">
        <title>Two-site phosphorylation of EPRS coordinates multimodal regulation of noncanonical translational control activity.</title>
        <authorList>
            <person name="Arif A."/>
            <person name="Jia J."/>
            <person name="Mukhopadhyay R."/>
            <person name="Willard B."/>
            <person name="Kinter M."/>
            <person name="Fox P.L."/>
        </authorList>
    </citation>
    <scope>INTERACTION WITH EPRS1</scope>
</reference>
<reference key="23">
    <citation type="journal article" date="2009" name="RNA">
        <title>Control of c-myc mRNA stability by IGF2BP1-associated cytoplasmic RNPs.</title>
        <authorList>
            <person name="Weidensdorfer D."/>
            <person name="Stoehr N."/>
            <person name="Baude A."/>
            <person name="Lederer M."/>
            <person name="Koehn M."/>
            <person name="Schierhorn A."/>
            <person name="Buchmeier S."/>
            <person name="Wahle E."/>
            <person name="Huettelmaiery S."/>
        </authorList>
    </citation>
    <scope>FUNCTION</scope>
    <scope>COMPONENT OF THE CRD-MEDIATED MRNA STABILIZATION COMPLEX</scope>
    <scope>IDENTIFICATION IN A MRNP COMPLEX</scope>
    <scope>SUBCELLULAR LOCATION</scope>
    <scope>IDENTIFICATION BY MASS SPECTROMETRY</scope>
</reference>
<reference key="24">
    <citation type="journal article" date="2009" name="Science">
        <title>Lysine acetylation targets protein complexes and co-regulates major cellular functions.</title>
        <authorList>
            <person name="Choudhary C."/>
            <person name="Kumar C."/>
            <person name="Gnad F."/>
            <person name="Nielsen M.L."/>
            <person name="Rehman M."/>
            <person name="Walther T.C."/>
            <person name="Olsen J.V."/>
            <person name="Mann M."/>
        </authorList>
    </citation>
    <scope>ACETYLATION [LARGE SCALE ANALYSIS] AT LYS-221 AND LYS-363</scope>
    <scope>IDENTIFICATION BY MASS SPECTROMETRY [LARGE SCALE ANALYSIS]</scope>
</reference>
<reference key="25">
    <citation type="journal article" date="2011" name="BMC Syst. Biol.">
        <title>Initial characterization of the human central proteome.</title>
        <authorList>
            <person name="Burkard T.R."/>
            <person name="Planyavsky M."/>
            <person name="Kaupe I."/>
            <person name="Breitwieser F.P."/>
            <person name="Buerckstuemmer T."/>
            <person name="Bennett K.L."/>
            <person name="Superti-Furga G."/>
            <person name="Colinge J."/>
        </authorList>
    </citation>
    <scope>IDENTIFICATION BY MASS SPECTROMETRY [LARGE SCALE ANALYSIS]</scope>
</reference>
<reference key="26">
    <citation type="journal article" date="2011" name="FASEB J.">
        <title>Modulation of exosome-mediated mRNA turnover by interaction of GTP-binding protein 1 (GTPBP1) with its target mRNAs.</title>
        <authorList>
            <person name="Woo K.C."/>
            <person name="Kim T.D."/>
            <person name="Lee K.H."/>
            <person name="Kim D.Y."/>
            <person name="Kim S."/>
            <person name="Lee H.R."/>
            <person name="Kang H.J."/>
            <person name="Chung S.J."/>
            <person name="Senju S."/>
            <person name="Nishimura Y."/>
            <person name="Kim K.T."/>
        </authorList>
    </citation>
    <scope>INTERACTION WITH GTPBP1</scope>
</reference>
<reference key="27">
    <citation type="journal article" date="2012" name="Mol. Cell. Biol.">
        <title>Heterotrimeric GAIT complex drives transcript-selective translation inhibition in murine macrophages.</title>
        <authorList>
            <person name="Arif A."/>
            <person name="Chatterjee P."/>
            <person name="Moodt R.A."/>
            <person name="Fox P.L."/>
        </authorList>
    </citation>
    <scope>FUNCTION</scope>
    <scope>RECONSTITUTION OF THE GAIT COMPLEX</scope>
</reference>
<reference key="28">
    <citation type="journal article" date="2013" name="J. Proteome Res.">
        <title>Toward a comprehensive characterization of a human cancer cell phosphoproteome.</title>
        <authorList>
            <person name="Zhou H."/>
            <person name="Di Palma S."/>
            <person name="Preisinger C."/>
            <person name="Peng M."/>
            <person name="Polat A.N."/>
            <person name="Heck A.J."/>
            <person name="Mohammed S."/>
        </authorList>
    </citation>
    <scope>PHOSPHORYLATION [LARGE SCALE ANALYSIS] AT SER-159</scope>
    <scope>IDENTIFICATION BY MASS SPECTROMETRY [LARGE SCALE ANALYSIS]</scope>
    <source>
        <tissue>Erythroleukemia</tissue>
    </source>
</reference>
<reference key="29">
    <citation type="journal article" date="2013" name="Nat. Methods">
        <title>A Y2H-seq approach defines the human protein methyltransferase interactome.</title>
        <authorList>
            <person name="Weimann M."/>
            <person name="Grossmann A."/>
            <person name="Woodsmith J."/>
            <person name="Ozkan Z."/>
            <person name="Birth P."/>
            <person name="Meierhofer D."/>
            <person name="Benlasfer N."/>
            <person name="Valovka T."/>
            <person name="Timmermann B."/>
            <person name="Wanker E.E."/>
            <person name="Sauer S."/>
            <person name="Stelzl U."/>
        </authorList>
    </citation>
    <scope>METHYLATION AT ARG-444; ARG-496; ARG-510; ARG-518; ARG-526; ARG-536 AND ARG-539 BY PRMT1</scope>
    <scope>IDENTIFICATION BY MASS SPECTROMETRY</scope>
</reference>
<reference key="30">
    <citation type="journal article" date="2014" name="J. Proteomics">
        <title>An enzyme assisted RP-RPLC approach for in-depth analysis of human liver phosphoproteome.</title>
        <authorList>
            <person name="Bian Y."/>
            <person name="Song C."/>
            <person name="Cheng K."/>
            <person name="Dong M."/>
            <person name="Wang F."/>
            <person name="Huang J."/>
            <person name="Sun D."/>
            <person name="Wang L."/>
            <person name="Ye M."/>
            <person name="Zou H."/>
        </authorList>
    </citation>
    <scope>IDENTIFICATION BY MASS SPECTROMETRY [LARGE SCALE ANALYSIS]</scope>
    <source>
        <tissue>Liver</tissue>
    </source>
</reference>
<reference key="31">
    <citation type="journal article" date="2015" name="Proteomics">
        <title>N-terminome analysis of the human mitochondrial proteome.</title>
        <authorList>
            <person name="Vaca Jacome A.S."/>
            <person name="Rabilloud T."/>
            <person name="Schaeffer-Reiss C."/>
            <person name="Rompais M."/>
            <person name="Ayoub D."/>
            <person name="Lane L."/>
            <person name="Bairoch A."/>
            <person name="Van Dorsselaer A."/>
            <person name="Carapito C."/>
        </authorList>
    </citation>
    <scope>IDENTIFICATION BY MASS SPECTROMETRY [LARGE SCALE ANALYSIS]</scope>
</reference>
<reference key="32">
    <citation type="journal article" date="2017" name="Nat. Struct. Mol. Biol.">
        <title>Site-specific mapping of the human SUMO proteome reveals co-modification with phosphorylation.</title>
        <authorList>
            <person name="Hendriks I.A."/>
            <person name="Lyon D."/>
            <person name="Young C."/>
            <person name="Jensen L.J."/>
            <person name="Vertegaal A.C."/>
            <person name="Nielsen M.L."/>
        </authorList>
    </citation>
    <scope>SUMOYLATION [LARGE SCALE ANALYSIS] AT LYS-168 AND LYS-607</scope>
    <scope>IDENTIFICATION BY MASS SPECTROMETRY [LARGE SCALE ANALYSIS]</scope>
</reference>
<reference key="33">
    <citation type="journal article" date="2022" name="Cell Death Differ.">
        <title>A viral interferon regulatory factor degrades RNA-binding protein hnRNP Q1 to enhance aerobic glycolysis via recruiting E3 ubiquitin ligase KLHL3 and decaying GDPD1 mRNA.</title>
        <authorList>
            <person name="Qi X."/>
            <person name="Yan Q."/>
            <person name="Shang Y."/>
            <person name="Zhao R."/>
            <person name="Ding X."/>
            <person name="Gao S.J."/>
            <person name="Li W."/>
            <person name="Lu C."/>
        </authorList>
    </citation>
    <scope>INTERACTION WITH HERPES VIRUS 8/HHV-8 PROTEIN VIRF-1</scope>
    <scope>SUBCELLULAR LOCATION</scope>
</reference>
<reference key="34">
    <citation type="submission" date="2006-09" db="PDB data bank">
        <title>Solution structure of the RNA binding domain in heterogeneous nuclear ribonucleoprotein Q.</title>
        <authorList>
            <consortium name="RIKEN structural genomics initiative (RSGI)"/>
        </authorList>
    </citation>
    <scope>STRUCTURE BY NMR OF 334-423</scope>
</reference>
<accession>O60506</accession>
<accession>E1P501</accession>
<accession>E1P502</accession>
<accession>Q53H05</accession>
<accession>Q5TCG2</accession>
<accession>Q5TCG3</accession>
<accession>Q8IW78</accession>
<accession>Q8N599</accession>
<accession>Q96LC1</accession>
<accession>Q96LC2</accession>
<accession>Q9Y583</accession>
<comment type="function">
    <text evidence="7 8 9 10 16 20">Heterogenous nuclear ribonucleoprotein (hnRNP) implicated in mRNA processing mechanisms. Component of the CRD-mediated complex that promotes MYC mRNA stability. Isoform 1, isoform 2 and isoform 3 are associated in vitro with pre-mRNA, splicing intermediates and mature mRNA protein complexes. Isoform 1 binds to apoB mRNA AU-rich sequences. Isoform 1 is part of the APOB mRNA editosome complex and may modulate the postranscriptional C to U RNA-editing of the APOB mRNA through either by binding to A1CF (APOBEC1 complementation factor), to APOBEC1 or to RNA itself. May be involved in translationally coupled mRNA turnover. Implicated with other RNA-binding proteins in the cytoplasmic deadenylation/translational and decay interplay of the FOS mRNA mediated by the major coding-region determinant of instability (mCRD) domain. Interacts in vitro preferentially with poly(A) and poly(U) RNA sequences. Isoform 3 may be involved in cytoplasmic vesicle-based mRNA transport through interaction with synaptotagmins. Component of the GAIT (gamma interferon-activated inhibitor of translation) complex which mediates interferon-gamma-induced transcript-selective translation inhibition in inflammation processes. Upon interferon-gamma activation assembles into the GAIT complex which binds to stem loop-containing GAIT elements in the 3'-UTR of diverse inflammatory mRNAs (such as ceruplasmin) and suppresses their translation; seems not to be essential for GAIT complex function.</text>
</comment>
<comment type="subunit">
    <text evidence="1 7 8 9 10 11 12 14 15 16 17 18 19 23">Isoform 1 is a component of the APOB mRNA editosome complex and interacts with APOBEC1 and A1CF (APOBEC1 complementation factor). Part of a complex associated with the FOS mCRD domain and consisting of PABPC1, PAIP1, CSDE1/UNR, HNRPD and SYNCRIP. Isoform 3 interacts with HNRPR. Interacts with POLR2A hyperphosphorylated C-terminal domain. Isoform 1, isoform 2 and isoform 3 interact with SMN. Isoform 3 interacts through its C-terminal domain with SYT7, SYT8 and SYT9 (By similarity). The non-phosphorylated and phosphorylated forms are colocalized with PAIP1 in polysomes (By similarity). Interacts with HABP4 (PubMed:19523114). Identified in a histone pre-mRNA complex, at least composed of ERI1, LSM11, SLBP, SNRPB, SYNCRIP and YBX1 (By similarity). Identified in the spliceosome C complex. Component of the coding region determinant (CRD)-mediated complex, composed of DHX9, HNRNPU, IGF2BP1, SYNCRIP and YBX1. Identified in a mRNP complex, at least composed of DHX9, DDX3X, ELAVL1, HNRNPU, IGF2BP1, ILF3, PABPC1, PCBP2, PTBP2, STAU1, STAU2, SYNCRIP and YBX1. Identified in a mRNP granule complex, at least composed of ACTB, ACTN4, DHX9, ERG, HNRNPA1, HNRNPA2B1, HNRNPAB, HNRNPD, HNRNPL, HNRNPR, HNRNPU, HSPA1, HSPA8, IGF2BP1, ILF2, ILF3, NCBP1, NCL, PABPC1, PABPC4, PABPN1, RPLP0, RPS3, RPS3A, RPS4X, RPS8, RPS9, SYNCRIP, YBX1 and untranslated mRNAs. Interacts with GTPBP1. Component of the GAIT complex; in humans the complex assembly seems to be a two-step process in which EPRS1 first associates with SYNCRIP to form a pre-GAIT complex which is deficient in GAIT element binding.</text>
</comment>
<comment type="subunit">
    <text evidence="24">(Microbial infection) Interacts with minute virus of mice (MVM) NS1 protein.</text>
</comment>
<comment type="subunit">
    <text evidence="22">(Microbial infection) Interacts with herpes virus 8/HHV-8 protein vIRF-1; this interaction induces ubiquitination and degradation of SYNCRIP.</text>
</comment>
<comment type="interaction">
    <interactant intactId="EBI-1024357">
        <id>O60506</id>
    </interactant>
    <interactant intactId="EBI-355315">
        <id>P07814</id>
        <label>EPRS1</label>
    </interactant>
    <organismsDiffer>false</organismsDiffer>
    <experiments>3</experiments>
</comment>
<comment type="interaction">
    <interactant intactId="EBI-1024357">
        <id>O60506</id>
    </interactant>
    <interactant intactId="EBI-523625">
        <id>Q5JVS0</id>
        <label>HABP4</label>
    </interactant>
    <organismsDiffer>false</organismsDiffer>
    <experiments>2</experiments>
</comment>
<comment type="interaction">
    <interactant intactId="EBI-1024357">
        <id>O60506</id>
    </interactant>
    <interactant intactId="EBI-432545">
        <id>Q14103-4</id>
        <label>HNRNPD</label>
    </interactant>
    <organismsDiffer>false</organismsDiffer>
    <experiments>3</experiments>
</comment>
<comment type="interaction">
    <interactant intactId="EBI-1024357">
        <id>O60506</id>
    </interactant>
    <interactant intactId="EBI-78738">
        <id>Q99873</id>
        <label>PRMT1</label>
    </interactant>
    <organismsDiffer>false</organismsDiffer>
    <experiments>2</experiments>
</comment>
<comment type="interaction">
    <interactant intactId="EBI-1024357">
        <id>O60506</id>
    </interactant>
    <interactant intactId="EBI-745545">
        <id>Q9NR22</id>
        <label>PRMT8</label>
    </interactant>
    <organismsDiffer>false</organismsDiffer>
    <experiments>6</experiments>
</comment>
<comment type="interaction">
    <interactant intactId="EBI-1024357">
        <id>O60506</id>
    </interactant>
    <interactant intactId="EBI-10186886">
        <id>Q9NR22-2</id>
        <label>PRMT8</label>
    </interactant>
    <organismsDiffer>false</organismsDiffer>
    <experiments>3</experiments>
</comment>
<comment type="interaction">
    <interactant intactId="EBI-11123832">
        <id>O60506-4</id>
    </interactant>
    <interactant intactId="EBI-11954292">
        <id>Q86V38</id>
        <label>ATN1</label>
    </interactant>
    <organismsDiffer>false</organismsDiffer>
    <experiments>3</experiments>
</comment>
<comment type="interaction">
    <interactant intactId="EBI-11123832">
        <id>O60506-4</id>
    </interactant>
    <interactant intactId="EBI-718729">
        <id>P55212</id>
        <label>CASP6</label>
    </interactant>
    <organismsDiffer>false</organismsDiffer>
    <experiments>3</experiments>
</comment>
<comment type="interaction">
    <interactant intactId="EBI-11123832">
        <id>O60506-4</id>
    </interactant>
    <interactant intactId="EBI-6875961">
        <id>P02489</id>
        <label>CRYAA</label>
    </interactant>
    <organismsDiffer>false</organismsDiffer>
    <experiments>3</experiments>
</comment>
<comment type="interaction">
    <interactant intactId="EBI-11123832">
        <id>O60506-4</id>
    </interactant>
    <interactant intactId="EBI-750300">
        <id>Q01658</id>
        <label>DR1</label>
    </interactant>
    <organismsDiffer>false</organismsDiffer>
    <experiments>3</experiments>
</comment>
<comment type="interaction">
    <interactant intactId="EBI-11123832">
        <id>O60506-4</id>
    </interactant>
    <interactant intactId="EBI-356015">
        <id>Q14204</id>
        <label>DYNC1H1</label>
    </interactant>
    <organismsDiffer>false</organismsDiffer>
    <experiments>3</experiments>
</comment>
<comment type="interaction">
    <interactant intactId="EBI-11123832">
        <id>O60506-4</id>
    </interactant>
    <interactant intactId="EBI-1054228">
        <id>P41091</id>
        <label>EIF2S3</label>
    </interactant>
    <organismsDiffer>false</organismsDiffer>
    <experiments>3</experiments>
</comment>
<comment type="interaction">
    <interactant intactId="EBI-11123832">
        <id>O60506-4</id>
    </interactant>
    <interactant intactId="EBI-10226858">
        <id>Q0VDC6</id>
        <label>FKBP1A</label>
    </interactant>
    <organismsDiffer>false</organismsDiffer>
    <experiments>3</experiments>
</comment>
<comment type="interaction">
    <interactant intactId="EBI-11123832">
        <id>O60506-4</id>
    </interactant>
    <interactant intactId="EBI-389564">
        <id>Q00403</id>
        <label>GTF2B</label>
    </interactant>
    <organismsDiffer>false</organismsDiffer>
    <experiments>3</experiments>
</comment>
<comment type="interaction">
    <interactant intactId="EBI-11123832">
        <id>O60506-4</id>
    </interactant>
    <interactant intactId="EBI-473886">
        <id>O00291</id>
        <label>HIP1</label>
    </interactant>
    <organismsDiffer>false</organismsDiffer>
    <experiments>3</experiments>
</comment>
<comment type="interaction">
    <interactant intactId="EBI-11123832">
        <id>O60506-4</id>
    </interactant>
    <interactant intactId="EBI-356991">
        <id>P54652</id>
        <label>HSPA2</label>
    </interactant>
    <organismsDiffer>false</organismsDiffer>
    <experiments>3</experiments>
</comment>
<comment type="interaction">
    <interactant intactId="EBI-11123832">
        <id>O60506-4</id>
    </interactant>
    <interactant intactId="EBI-2432309">
        <id>Q92876</id>
        <label>KLK6</label>
    </interactant>
    <organismsDiffer>false</organismsDiffer>
    <experiments>3</experiments>
</comment>
<comment type="interaction">
    <interactant intactId="EBI-11123832">
        <id>O60506-4</id>
    </interactant>
    <interactant intactId="EBI-21591415">
        <id>P13473-2</id>
        <label>LAMP2</label>
    </interactant>
    <organismsDiffer>false</organismsDiffer>
    <experiments>3</experiments>
</comment>
<comment type="interaction">
    <interactant intactId="EBI-11123832">
        <id>O60506-4</id>
    </interactant>
    <interactant intactId="EBI-2858213">
        <id>Q86VE0</id>
        <label>MYPOP</label>
    </interactant>
    <organismsDiffer>false</organismsDiffer>
    <experiments>3</experiments>
</comment>
<comment type="interaction">
    <interactant intactId="EBI-11123832">
        <id>O60506-4</id>
    </interactant>
    <interactant intactId="EBI-1307">
        <id>Q13153</id>
        <label>PAK1</label>
    </interactant>
    <organismsDiffer>false</organismsDiffer>
    <experiments>3</experiments>
</comment>
<comment type="interaction">
    <interactant intactId="EBI-11123832">
        <id>O60506-4</id>
    </interactant>
    <interactant intactId="EBI-716404">
        <id>P16284</id>
        <label>PECAM1</label>
    </interactant>
    <organismsDiffer>false</organismsDiffer>
    <experiments>3</experiments>
</comment>
<comment type="interaction">
    <interactant intactId="EBI-11123832">
        <id>O60506-4</id>
    </interactant>
    <interactant intactId="EBI-473160">
        <id>Q8N2W9</id>
        <label>PIAS4</label>
    </interactant>
    <organismsDiffer>false</organismsDiffer>
    <experiments>3</experiments>
</comment>
<comment type="interaction">
    <interactant intactId="EBI-11123832">
        <id>O60506-4</id>
    </interactant>
    <interactant intactId="EBI-17165527">
        <id>Q99873-3</id>
        <label>PRMT1</label>
    </interactant>
    <organismsDiffer>false</organismsDiffer>
    <experiments>4</experiments>
</comment>
<comment type="interaction">
    <interactant intactId="EBI-11123832">
        <id>O60506-4</id>
    </interactant>
    <interactant intactId="EBI-745545">
        <id>Q9NR22</id>
        <label>PRMT8</label>
    </interactant>
    <organismsDiffer>false</organismsDiffer>
    <experiments>3</experiments>
</comment>
<comment type="interaction">
    <interactant intactId="EBI-11123832">
        <id>O60506-4</id>
    </interactant>
    <interactant intactId="EBI-399437">
        <id>P20339</id>
        <label>RAB5A</label>
    </interactant>
    <organismsDiffer>false</organismsDiffer>
    <experiments>3</experiments>
</comment>
<comment type="interaction">
    <interactant intactId="EBI-11123832">
        <id>O60506-4</id>
    </interactant>
    <interactant intactId="EBI-286642">
        <id>P62826</id>
        <label>RAN</label>
    </interactant>
    <organismsDiffer>false</organismsDiffer>
    <experiments>3</experiments>
</comment>
<comment type="interaction">
    <interactant intactId="EBI-11123832">
        <id>O60506-4</id>
    </interactant>
    <interactant intactId="EBI-11602692">
        <id>Q6NXR8</id>
        <label>RPS3A</label>
    </interactant>
    <organismsDiffer>false</organismsDiffer>
    <experiments>3</experiments>
</comment>
<comment type="interaction">
    <interactant intactId="EBI-11123832">
        <id>O60506-4</id>
    </interactant>
    <interactant intactId="EBI-1172957">
        <id>P34741</id>
        <label>SDC2</label>
    </interactant>
    <organismsDiffer>false</organismsDiffer>
    <experiments>3</experiments>
</comment>
<comment type="interaction">
    <interactant intactId="EBI-11123832">
        <id>O60506-4</id>
    </interactant>
    <interactant intactId="EBI-2623095">
        <id>Q9Y371</id>
        <label>SH3GLB1</label>
    </interactant>
    <organismsDiffer>false</organismsDiffer>
    <experiments>3</experiments>
</comment>
<comment type="interaction">
    <interactant intactId="EBI-11123832">
        <id>O60506-4</id>
    </interactant>
    <interactant intactId="EBI-372899">
        <id>Q13148</id>
        <label>TARDBP</label>
    </interactant>
    <organismsDiffer>false</organismsDiffer>
    <experiments>6</experiments>
</comment>
<comment type="interaction">
    <interactant intactId="EBI-11123832">
        <id>O60506-4</id>
    </interactant>
    <interactant intactId="EBI-473850">
        <id>P61086</id>
        <label>UBE2K</label>
    </interactant>
    <organismsDiffer>false</organismsDiffer>
    <experiments>3</experiments>
</comment>
<comment type="interaction">
    <interactant intactId="EBI-11123832">
        <id>O60506-4</id>
    </interactant>
    <interactant intactId="EBI-353844">
        <id>P08670</id>
        <label>VIM</label>
    </interactant>
    <organismsDiffer>false</organismsDiffer>
    <experiments>3</experiments>
</comment>
<comment type="subcellular location">
    <subcellularLocation>
        <location evidence="10 15 16 22">Cytoplasm</location>
    </subcellularLocation>
    <subcellularLocation>
        <location evidence="3">Microsome</location>
    </subcellularLocation>
    <subcellularLocation>
        <location evidence="1">Endoplasmic reticulum</location>
    </subcellularLocation>
    <subcellularLocation>
        <location evidence="3">Nucleus</location>
    </subcellularLocation>
    <text evidence="2 3">The tyrosine phosphorylated form bound to RNA is found in microsomes (By similarity). Localized in cytoplasmic mRNP granules containing untranslated mRNAs (By similarity).</text>
</comment>
<comment type="subcellular location">
    <molecule>Isoform 1</molecule>
    <subcellularLocation>
        <location evidence="3">Nucleus</location>
        <location evidence="3">Nucleoplasm</location>
    </subcellularLocation>
    <text evidence="3">Expressed predominantly in the nucleoplasm.</text>
</comment>
<comment type="subcellular location">
    <molecule>Isoform 2</molecule>
    <subcellularLocation>
        <location evidence="3">Nucleus</location>
        <location evidence="3">Nucleoplasm</location>
    </subcellularLocation>
    <text evidence="3">Expressed predominantly in the nucleoplasm.</text>
</comment>
<comment type="subcellular location">
    <molecule>Isoform 3</molecule>
    <subcellularLocation>
        <location evidence="3">Nucleus</location>
        <location evidence="3">Nucleoplasm</location>
    </subcellularLocation>
    <text evidence="3">Expressed predominantly in the nucleoplasm.</text>
</comment>
<comment type="alternative products">
    <event type="alternative splicing"/>
    <isoform>
        <id>O60506-1</id>
        <name>1</name>
        <name>hnRNP Q3</name>
        <sequence type="displayed"/>
    </isoform>
    <isoform>
        <id>O60506-2</id>
        <name>2</name>
        <name>hnRNP Q2</name>
        <sequence type="described" ref="VSP_009583"/>
    </isoform>
    <isoform>
        <id>O60506-3</id>
        <name>3</name>
        <name>hnRNP Q1</name>
        <sequence type="described" ref="VSP_009584"/>
    </isoform>
    <isoform>
        <id>O60506-4</id>
        <name>4</name>
        <sequence type="described" ref="VSP_009583 VSP_009584"/>
    </isoform>
    <isoform>
        <id>O60506-5</id>
        <name>5</name>
        <sequence type="described" ref="VSP_009581 VSP_009582 VSP_009584"/>
    </isoform>
</comment>
<comment type="tissue specificity">
    <text evidence="9">Ubiquitously expressed. Detected in heart, brain, pancreas, placenta, spleen, lung, liver, skeletal muscle, kidney, thymus, prostate, uterus, small intestine, colon, peripheral blood and testis.</text>
</comment>
<comment type="domain">
    <text>The domain containing eight Arg-Gly-Gly repeats (RGG/RXR-box) may be involved in RNA-binding and protein-protein interactions. It is methylated by PRMT1, and essential for nuclear localization.</text>
</comment>
<comment type="PTM">
    <text evidence="1">Phosphorylated on tyrosine. The membrane-bound form found in microsomes is phosphorylated in vitro by insulin receptor tyrosine kinase (INSR). Phosphorylation is inhibited upon binding to RNA, whereas the cytoplasmic form is poorly phosphorylated (By similarity).</text>
</comment>
<comment type="miscellaneous">
    <molecule>Isoform 2</molecule>
    <text evidence="28">May be due to a competing donor splice site.</text>
</comment>
<comment type="miscellaneous">
    <molecule>Isoform 3</molecule>
    <text evidence="28">May be due to a competing donor splice site and to an exon inclusion.</text>
</comment>
<comment type="miscellaneous">
    <molecule>Isoform 4</molecule>
    <text evidence="28">May be due to a competing donor splice site and to an exon inclusion.</text>
</comment>
<comment type="miscellaneous">
    <molecule>Isoform 5</molecule>
    <text evidence="28">May be due to a competing donor splice site and to an exon inclusion.</text>
</comment>
<comment type="sequence caution" evidence="28">
    <conflict type="miscellaneous discrepancy">
        <sequence resource="EMBL-CDS" id="AAH15575"/>
    </conflict>
    <text>Contaminating sequence. Potential poly-A sequence starting in position 413.</text>
</comment>
<dbReference type="EMBL" id="AF155568">
    <property type="protein sequence ID" value="AAD38198.1"/>
    <property type="molecule type" value="mRNA"/>
</dbReference>
<dbReference type="EMBL" id="AF037448">
    <property type="protein sequence ID" value="AAC12926.1"/>
    <property type="molecule type" value="mRNA"/>
</dbReference>
<dbReference type="EMBL" id="AY034481">
    <property type="protein sequence ID" value="AAK59703.1"/>
    <property type="molecule type" value="mRNA"/>
</dbReference>
<dbReference type="EMBL" id="AY034482">
    <property type="protein sequence ID" value="AAK59704.1"/>
    <property type="molecule type" value="mRNA"/>
</dbReference>
<dbReference type="EMBL" id="AY034483">
    <property type="protein sequence ID" value="AAK59705.1"/>
    <property type="molecule type" value="mRNA"/>
</dbReference>
<dbReference type="EMBL" id="AK222776">
    <property type="protein sequence ID" value="BAD96496.1"/>
    <property type="molecule type" value="mRNA"/>
</dbReference>
<dbReference type="EMBL" id="AL136082">
    <property type="status" value="NOT_ANNOTATED_CDS"/>
    <property type="molecule type" value="Genomic_DNA"/>
</dbReference>
<dbReference type="EMBL" id="CH471051">
    <property type="protein sequence ID" value="EAW48625.1"/>
    <property type="molecule type" value="Genomic_DNA"/>
</dbReference>
<dbReference type="EMBL" id="CH471051">
    <property type="protein sequence ID" value="EAW48626.1"/>
    <property type="molecule type" value="Genomic_DNA"/>
</dbReference>
<dbReference type="EMBL" id="CH471051">
    <property type="protein sequence ID" value="EAW48629.1"/>
    <property type="molecule type" value="Genomic_DNA"/>
</dbReference>
<dbReference type="EMBL" id="CH471051">
    <property type="protein sequence ID" value="EAW48630.1"/>
    <property type="molecule type" value="Genomic_DNA"/>
</dbReference>
<dbReference type="EMBL" id="BC015575">
    <property type="protein sequence ID" value="AAH15575.1"/>
    <property type="status" value="ALT_SEQ"/>
    <property type="molecule type" value="mRNA"/>
</dbReference>
<dbReference type="EMBL" id="BC032643">
    <property type="protein sequence ID" value="AAH32643.1"/>
    <property type="molecule type" value="mRNA"/>
</dbReference>
<dbReference type="EMBL" id="BC040844">
    <property type="protein sequence ID" value="AAH40844.1"/>
    <property type="molecule type" value="mRNA"/>
</dbReference>
<dbReference type="CCDS" id="CCDS5005.1">
    <molecule id="O60506-1"/>
</dbReference>
<dbReference type="CCDS" id="CCDS55041.1">
    <molecule id="O60506-3"/>
</dbReference>
<dbReference type="CCDS" id="CCDS93967.1">
    <molecule id="O60506-2"/>
</dbReference>
<dbReference type="RefSeq" id="NP_001153145.1">
    <property type="nucleotide sequence ID" value="NM_001159673.1"/>
</dbReference>
<dbReference type="RefSeq" id="NP_001153146.1">
    <molecule id="O60506-4"/>
    <property type="nucleotide sequence ID" value="NM_001159674.2"/>
</dbReference>
<dbReference type="RefSeq" id="NP_001153147.1">
    <molecule id="O60506-2"/>
    <property type="nucleotide sequence ID" value="NM_001159675.1"/>
</dbReference>
<dbReference type="RefSeq" id="NP_001153148.1">
    <property type="nucleotide sequence ID" value="NM_001159676.1"/>
</dbReference>
<dbReference type="RefSeq" id="NP_001153149.1">
    <molecule id="O60506-3"/>
    <property type="nucleotide sequence ID" value="NM_001159677.2"/>
</dbReference>
<dbReference type="RefSeq" id="NP_001240700.1">
    <molecule id="O60506-5"/>
    <property type="nucleotide sequence ID" value="NM_001253771.2"/>
</dbReference>
<dbReference type="RefSeq" id="NP_006363.4">
    <molecule id="O60506-1"/>
    <property type="nucleotide sequence ID" value="NM_006372.4"/>
</dbReference>
<dbReference type="RefSeq" id="XP_005248694.1">
    <molecule id="O60506-1"/>
    <property type="nucleotide sequence ID" value="XM_005248637.3"/>
</dbReference>
<dbReference type="RefSeq" id="XP_016865667.1">
    <molecule id="O60506-3"/>
    <property type="nucleotide sequence ID" value="XM_017010178.3"/>
</dbReference>
<dbReference type="RefSeq" id="XP_054210010.1">
    <molecule id="O60506-1"/>
    <property type="nucleotide sequence ID" value="XM_054354035.1"/>
</dbReference>
<dbReference type="RefSeq" id="XP_054210015.1">
    <molecule id="O60506-3"/>
    <property type="nucleotide sequence ID" value="XM_054354040.1"/>
</dbReference>
<dbReference type="PDB" id="2DGU">
    <property type="method" value="NMR"/>
    <property type="chains" value="A=334-423"/>
</dbReference>
<dbReference type="PDB" id="2MXT">
    <property type="method" value="NMR"/>
    <property type="chains" value="A=24-107"/>
</dbReference>
<dbReference type="PDB" id="2NBB">
    <property type="method" value="NMR"/>
    <property type="chains" value="A=24-140"/>
</dbReference>
<dbReference type="PDB" id="6KOR">
    <property type="method" value="X-ray"/>
    <property type="resolution" value="2.60 A"/>
    <property type="chains" value="A=242-428"/>
</dbReference>
<dbReference type="PDBsum" id="2DGU"/>
<dbReference type="PDBsum" id="2MXT"/>
<dbReference type="PDBsum" id="2NBB"/>
<dbReference type="PDBsum" id="6KOR"/>
<dbReference type="SMR" id="O60506"/>
<dbReference type="BioGRID" id="115755">
    <property type="interactions" value="712"/>
</dbReference>
<dbReference type="ComplexPortal" id="CPX-1076">
    <property type="entry name" value="mCRD-poly(A)-bridging complex"/>
</dbReference>
<dbReference type="ComplexPortal" id="CPX-1080">
    <property type="entry name" value="CRD-mediated mRNA stability complex"/>
</dbReference>
<dbReference type="ComplexPortal" id="CPX-1097">
    <molecule id="O60506-1"/>
    <property type="entry name" value="C-to-U editosome complex"/>
</dbReference>
<dbReference type="ComplexPortal" id="CPX-2476">
    <property type="entry name" value="GAIT complex"/>
</dbReference>
<dbReference type="CORUM" id="O60506"/>
<dbReference type="DIP" id="DIP-35540N"/>
<dbReference type="FunCoup" id="O60506">
    <property type="interactions" value="3661"/>
</dbReference>
<dbReference type="IntAct" id="O60506">
    <property type="interactions" value="330"/>
</dbReference>
<dbReference type="MINT" id="O60506"/>
<dbReference type="STRING" id="9606.ENSP00000358635"/>
<dbReference type="ChEMBL" id="CHEMBL4295997"/>
<dbReference type="GlyGen" id="O60506">
    <property type="glycosylation" value="2 sites, 2 N-linked glycans (1 site), 1 O-linked glycan (1 site)"/>
</dbReference>
<dbReference type="iPTMnet" id="O60506"/>
<dbReference type="MetOSite" id="O60506"/>
<dbReference type="PhosphoSitePlus" id="O60506"/>
<dbReference type="SwissPalm" id="O60506"/>
<dbReference type="BioMuta" id="SYNCRIP"/>
<dbReference type="jPOST" id="O60506"/>
<dbReference type="MassIVE" id="O60506"/>
<dbReference type="PaxDb" id="9606-ENSP00000358635"/>
<dbReference type="PeptideAtlas" id="O60506"/>
<dbReference type="ProteomicsDB" id="49444">
    <molecule id="O60506-1"/>
</dbReference>
<dbReference type="ProteomicsDB" id="49445">
    <molecule id="O60506-2"/>
</dbReference>
<dbReference type="ProteomicsDB" id="49446">
    <molecule id="O60506-3"/>
</dbReference>
<dbReference type="ProteomicsDB" id="49447">
    <molecule id="O60506-4"/>
</dbReference>
<dbReference type="ProteomicsDB" id="49448">
    <molecule id="O60506-5"/>
</dbReference>
<dbReference type="Pumba" id="O60506"/>
<dbReference type="Antibodypedia" id="18610">
    <property type="antibodies" value="305 antibodies from 37 providers"/>
</dbReference>
<dbReference type="DNASU" id="10492"/>
<dbReference type="Ensembl" id="ENST00000355238.11">
    <molecule id="O60506-3"/>
    <property type="protein sequence ID" value="ENSP00000347380.6"/>
    <property type="gene ID" value="ENSG00000135316.20"/>
</dbReference>
<dbReference type="Ensembl" id="ENST00000369622.8">
    <molecule id="O60506-1"/>
    <property type="protein sequence ID" value="ENSP00000358635.3"/>
    <property type="gene ID" value="ENSG00000135316.20"/>
</dbReference>
<dbReference type="Ensembl" id="ENST00000444272.2">
    <molecule id="O60506-3"/>
    <property type="protein sequence ID" value="ENSP00000397782.2"/>
    <property type="gene ID" value="ENSG00000135316.20"/>
</dbReference>
<dbReference type="Ensembl" id="ENST00000676637.1">
    <molecule id="O60506-3"/>
    <property type="protein sequence ID" value="ENSP00000502974.1"/>
    <property type="gene ID" value="ENSG00000135316.20"/>
</dbReference>
<dbReference type="Ensembl" id="ENST00000676688.1">
    <molecule id="O60506-1"/>
    <property type="protein sequence ID" value="ENSP00000504706.1"/>
    <property type="gene ID" value="ENSG00000135316.20"/>
</dbReference>
<dbReference type="Ensembl" id="ENST00000678355.1">
    <molecule id="O60506-1"/>
    <property type="protein sequence ID" value="ENSP00000503783.1"/>
    <property type="gene ID" value="ENSG00000135316.20"/>
</dbReference>
<dbReference type="Ensembl" id="ENST00000678528.1">
    <molecule id="O60506-3"/>
    <property type="protein sequence ID" value="ENSP00000503246.1"/>
    <property type="gene ID" value="ENSG00000135316.20"/>
</dbReference>
<dbReference type="Ensembl" id="ENST00000678930.1">
    <molecule id="O60506-2"/>
    <property type="protein sequence ID" value="ENSP00000504120.1"/>
    <property type="gene ID" value="ENSG00000135316.20"/>
</dbReference>
<dbReference type="GeneID" id="10492"/>
<dbReference type="KEGG" id="hsa:10492"/>
<dbReference type="MANE-Select" id="ENST00000369622.8">
    <property type="protein sequence ID" value="ENSP00000358635.3"/>
    <property type="RefSeq nucleotide sequence ID" value="NM_006372.5"/>
    <property type="RefSeq protein sequence ID" value="NP_006363.4"/>
</dbReference>
<dbReference type="UCSC" id="uc003pkv.4">
    <molecule id="O60506-1"/>
    <property type="organism name" value="human"/>
</dbReference>
<dbReference type="AGR" id="HGNC:16918"/>
<dbReference type="CTD" id="10492"/>
<dbReference type="DisGeNET" id="10492"/>
<dbReference type="GeneCards" id="SYNCRIP"/>
<dbReference type="HGNC" id="HGNC:16918">
    <property type="gene designation" value="SYNCRIP"/>
</dbReference>
<dbReference type="HPA" id="ENSG00000135316">
    <property type="expression patterns" value="Low tissue specificity"/>
</dbReference>
<dbReference type="MalaCards" id="SYNCRIP"/>
<dbReference type="neXtProt" id="NX_O60506"/>
<dbReference type="OpenTargets" id="ENSG00000135316"/>
<dbReference type="Orphanet" id="528084">
    <property type="disease" value="Non-specific syndromic intellectual disability"/>
</dbReference>
<dbReference type="PharmGKB" id="PA134985065"/>
<dbReference type="VEuPathDB" id="HostDB:ENSG00000135316"/>
<dbReference type="eggNOG" id="KOG0117">
    <property type="taxonomic scope" value="Eukaryota"/>
</dbReference>
<dbReference type="GeneTree" id="ENSGT00940000153511"/>
<dbReference type="InParanoid" id="O60506"/>
<dbReference type="OMA" id="CVEYVCT"/>
<dbReference type="OrthoDB" id="3800936at2759"/>
<dbReference type="PAN-GO" id="O60506">
    <property type="GO annotations" value="5 GO annotations based on evolutionary models"/>
</dbReference>
<dbReference type="PhylomeDB" id="O60506"/>
<dbReference type="TreeFam" id="TF314932"/>
<dbReference type="PathwayCommons" id="O60506"/>
<dbReference type="SignaLink" id="O60506"/>
<dbReference type="SIGNOR" id="O60506"/>
<dbReference type="BioGRID-ORCS" id="10492">
    <property type="hits" value="131 hits in 1165 CRISPR screens"/>
</dbReference>
<dbReference type="CD-CODE" id="232F8A39">
    <property type="entry name" value="P-body"/>
</dbReference>
<dbReference type="CD-CODE" id="91857CE7">
    <property type="entry name" value="Nucleolus"/>
</dbReference>
<dbReference type="CD-CODE" id="DEE660B4">
    <property type="entry name" value="Stress granule"/>
</dbReference>
<dbReference type="CD-CODE" id="F85A2E29">
    <property type="entry name" value="IMP1 RNP granule"/>
</dbReference>
<dbReference type="CD-CODE" id="FB4E32DD">
    <property type="entry name" value="Presynaptic clusters and postsynaptic densities"/>
</dbReference>
<dbReference type="ChiTaRS" id="SYNCRIP">
    <property type="organism name" value="human"/>
</dbReference>
<dbReference type="EvolutionaryTrace" id="O60506"/>
<dbReference type="GeneWiki" id="SYNCRIP"/>
<dbReference type="GenomeRNAi" id="10492"/>
<dbReference type="Pharos" id="O60506">
    <property type="development level" value="Tbio"/>
</dbReference>
<dbReference type="PRO" id="PR:O60506"/>
<dbReference type="Proteomes" id="UP000005640">
    <property type="component" value="Chromosome 6"/>
</dbReference>
<dbReference type="RNAct" id="O60506">
    <property type="molecule type" value="protein"/>
</dbReference>
<dbReference type="Bgee" id="ENSG00000135316">
    <property type="expression patterns" value="Expressed in ventricular zone and 206 other cell types or tissues"/>
</dbReference>
<dbReference type="ExpressionAtlas" id="O60506">
    <property type="expression patterns" value="baseline and differential"/>
</dbReference>
<dbReference type="GO" id="GO:0071013">
    <property type="term" value="C:catalytic step 2 spliceosome"/>
    <property type="evidence" value="ECO:0000314"/>
    <property type="project" value="UniProtKB"/>
</dbReference>
<dbReference type="GO" id="GO:0070937">
    <property type="term" value="C:CRD-mediated mRNA stability complex"/>
    <property type="evidence" value="ECO:0000314"/>
    <property type="project" value="UniProtKB"/>
</dbReference>
<dbReference type="GO" id="GO:0005829">
    <property type="term" value="C:cytosol"/>
    <property type="evidence" value="ECO:0000314"/>
    <property type="project" value="ComplexPortal"/>
</dbReference>
<dbReference type="GO" id="GO:0005783">
    <property type="term" value="C:endoplasmic reticulum"/>
    <property type="evidence" value="ECO:0007669"/>
    <property type="project" value="UniProtKB-SubCell"/>
</dbReference>
<dbReference type="GO" id="GO:0097452">
    <property type="term" value="C:GAIT complex"/>
    <property type="evidence" value="ECO:0000314"/>
    <property type="project" value="UniProtKB"/>
</dbReference>
<dbReference type="GO" id="GO:0071204">
    <property type="term" value="C:histone pre-mRNA 3'end processing complex"/>
    <property type="evidence" value="ECO:0000250"/>
    <property type="project" value="UniProtKB"/>
</dbReference>
<dbReference type="GO" id="GO:0106002">
    <property type="term" value="C:mCRD-mediated mRNA stability complex"/>
    <property type="evidence" value="ECO:0000353"/>
    <property type="project" value="ComplexPortal"/>
</dbReference>
<dbReference type="GO" id="GO:0016020">
    <property type="term" value="C:membrane"/>
    <property type="evidence" value="ECO:0007005"/>
    <property type="project" value="UniProtKB"/>
</dbReference>
<dbReference type="GO" id="GO:0045293">
    <property type="term" value="C:mRNA editing complex"/>
    <property type="evidence" value="ECO:0000303"/>
    <property type="project" value="ComplexPortal"/>
</dbReference>
<dbReference type="GO" id="GO:0005654">
    <property type="term" value="C:nucleoplasm"/>
    <property type="evidence" value="ECO:0007669"/>
    <property type="project" value="UniProtKB-SubCell"/>
</dbReference>
<dbReference type="GO" id="GO:0005634">
    <property type="term" value="C:nucleus"/>
    <property type="evidence" value="ECO:0000314"/>
    <property type="project" value="ComplexPortal"/>
</dbReference>
<dbReference type="GO" id="GO:1990904">
    <property type="term" value="C:ribonucleoprotein complex"/>
    <property type="evidence" value="ECO:0000314"/>
    <property type="project" value="UniProtKB"/>
</dbReference>
<dbReference type="GO" id="GO:0048027">
    <property type="term" value="F:mRNA 5'-UTR binding"/>
    <property type="evidence" value="ECO:0000318"/>
    <property type="project" value="GO_Central"/>
</dbReference>
<dbReference type="GO" id="GO:0003723">
    <property type="term" value="F:RNA binding"/>
    <property type="evidence" value="ECO:0007005"/>
    <property type="project" value="UniProtKB"/>
</dbReference>
<dbReference type="GO" id="GO:0071346">
    <property type="term" value="P:cellular response to type II interferon"/>
    <property type="evidence" value="ECO:0000314"/>
    <property type="project" value="UniProtKB"/>
</dbReference>
<dbReference type="GO" id="GO:0141166">
    <property type="term" value="P:chromosomal 5-methylcytosine DNA demethylation pathway"/>
    <property type="evidence" value="ECO:0000303"/>
    <property type="project" value="ComplexPortal"/>
</dbReference>
<dbReference type="GO" id="GO:0070934">
    <property type="term" value="P:CRD-mediated mRNA stabilization"/>
    <property type="evidence" value="ECO:0000314"/>
    <property type="project" value="ComplexPortal"/>
</dbReference>
<dbReference type="GO" id="GO:0016556">
    <property type="term" value="P:mRNA modification"/>
    <property type="evidence" value="ECO:0000314"/>
    <property type="project" value="ComplexPortal"/>
</dbReference>
<dbReference type="GO" id="GO:0000398">
    <property type="term" value="P:mRNA splicing, via spliceosome"/>
    <property type="evidence" value="ECO:0000305"/>
    <property type="project" value="UniProtKB"/>
</dbReference>
<dbReference type="GO" id="GO:1900152">
    <property type="term" value="P:negative regulation of nuclear-transcribed mRNA catabolic process, deadenylation-dependent decay"/>
    <property type="evidence" value="ECO:0000314"/>
    <property type="project" value="ComplexPortal"/>
</dbReference>
<dbReference type="GO" id="GO:2000623">
    <property type="term" value="P:negative regulation of nuclear-transcribed mRNA catabolic process, nonsense-mediated decay"/>
    <property type="evidence" value="ECO:0000314"/>
    <property type="project" value="ComplexPortal"/>
</dbReference>
<dbReference type="GO" id="GO:0017148">
    <property type="term" value="P:negative regulation of translation"/>
    <property type="evidence" value="ECO:0000314"/>
    <property type="project" value="UniProtKB"/>
</dbReference>
<dbReference type="GO" id="GO:0001649">
    <property type="term" value="P:osteoblast differentiation"/>
    <property type="evidence" value="ECO:0007005"/>
    <property type="project" value="UniProtKB"/>
</dbReference>
<dbReference type="GO" id="GO:2000767">
    <property type="term" value="P:positive regulation of cytoplasmic translation"/>
    <property type="evidence" value="ECO:0000314"/>
    <property type="project" value="ComplexPortal"/>
</dbReference>
<dbReference type="GO" id="GO:0006396">
    <property type="term" value="P:RNA processing"/>
    <property type="evidence" value="ECO:0000304"/>
    <property type="project" value="ProtInc"/>
</dbReference>
<dbReference type="GO" id="GO:0008380">
    <property type="term" value="P:RNA splicing"/>
    <property type="evidence" value="ECO:0000304"/>
    <property type="project" value="ProtInc"/>
</dbReference>
<dbReference type="CDD" id="cd21066">
    <property type="entry name" value="NURR_hnRNPQ"/>
    <property type="match status" value="1"/>
</dbReference>
<dbReference type="CDD" id="cd12483">
    <property type="entry name" value="RRM1_hnRNPQ"/>
    <property type="match status" value="1"/>
</dbReference>
<dbReference type="CDD" id="cd12489">
    <property type="entry name" value="RRM2_hnRNPQ"/>
    <property type="match status" value="1"/>
</dbReference>
<dbReference type="CDD" id="cd12495">
    <property type="entry name" value="RRM3_hnRNPQ"/>
    <property type="match status" value="1"/>
</dbReference>
<dbReference type="FunFam" id="3.30.70.330:FF:000023">
    <property type="entry name" value="Heterogeneous nuclear ribonucleoprotein q isoform"/>
    <property type="match status" value="1"/>
</dbReference>
<dbReference type="FunFam" id="3.30.70.330:FF:000024">
    <property type="entry name" value="Heterogeneous nuclear ribonucleoprotein q isoform"/>
    <property type="match status" value="1"/>
</dbReference>
<dbReference type="FunFam" id="3.30.70.330:FF:000027">
    <property type="entry name" value="Heterogeneous nuclear ribonucleoprotein q isoform"/>
    <property type="match status" value="1"/>
</dbReference>
<dbReference type="Gene3D" id="3.30.70.330">
    <property type="match status" value="3"/>
</dbReference>
<dbReference type="InterPro" id="IPR041337">
    <property type="entry name" value="hnRNP_Q_AcD"/>
</dbReference>
<dbReference type="InterPro" id="IPR006535">
    <property type="entry name" value="HnRNP_R/Q_splicing_fac"/>
</dbReference>
<dbReference type="InterPro" id="IPR034544">
    <property type="entry name" value="hnRNPQ_RRM1"/>
</dbReference>
<dbReference type="InterPro" id="IPR034548">
    <property type="entry name" value="hnRNPQ_RRM2"/>
</dbReference>
<dbReference type="InterPro" id="IPR012677">
    <property type="entry name" value="Nucleotide-bd_a/b_plait_sf"/>
</dbReference>
<dbReference type="InterPro" id="IPR035979">
    <property type="entry name" value="RBD_domain_sf"/>
</dbReference>
<dbReference type="InterPro" id="IPR000504">
    <property type="entry name" value="RRM_dom"/>
</dbReference>
<dbReference type="NCBIfam" id="TIGR01648">
    <property type="entry name" value="hnRNP-R-Q"/>
    <property type="match status" value="1"/>
</dbReference>
<dbReference type="PANTHER" id="PTHR21245">
    <property type="entry name" value="HETEROGENEOUS NUCLEAR RIBONUCLEOPROTEIN"/>
    <property type="match status" value="1"/>
</dbReference>
<dbReference type="Pfam" id="PF18360">
    <property type="entry name" value="hnRNP_Q_AcD"/>
    <property type="match status" value="1"/>
</dbReference>
<dbReference type="Pfam" id="PF00076">
    <property type="entry name" value="RRM_1"/>
    <property type="match status" value="3"/>
</dbReference>
<dbReference type="SMART" id="SM00360">
    <property type="entry name" value="RRM"/>
    <property type="match status" value="3"/>
</dbReference>
<dbReference type="SUPFAM" id="SSF54928">
    <property type="entry name" value="RNA-binding domain, RBD"/>
    <property type="match status" value="3"/>
</dbReference>
<dbReference type="PROSITE" id="PS50102">
    <property type="entry name" value="RRM"/>
    <property type="match status" value="3"/>
</dbReference>
<feature type="initiator methionine" description="Removed" evidence="30">
    <location>
        <position position="1"/>
    </location>
</feature>
<feature type="chain" id="PRO_0000081867" description="Heterogeneous nuclear ribonucleoprotein Q">
    <location>
        <begin position="2"/>
        <end position="623"/>
    </location>
</feature>
<feature type="domain" description="RRM 1" evidence="5">
    <location>
        <begin position="162"/>
        <end position="241"/>
    </location>
</feature>
<feature type="domain" description="RRM 2" evidence="5">
    <location>
        <begin position="243"/>
        <end position="325"/>
    </location>
</feature>
<feature type="domain" description="RRM 3" evidence="5">
    <location>
        <begin position="338"/>
        <end position="408"/>
    </location>
</feature>
<feature type="repeat" description="1-1">
    <location>
        <begin position="448"/>
        <end position="450"/>
    </location>
</feature>
<feature type="repeat" description="1-2">
    <location>
        <begin position="451"/>
        <end position="453"/>
    </location>
</feature>
<feature type="repeat" description="2-1">
    <location>
        <begin position="460"/>
        <end position="464"/>
    </location>
</feature>
<feature type="repeat" description="2-2">
    <location>
        <begin position="469"/>
        <end position="472"/>
    </location>
</feature>
<feature type="repeat" description="1-3">
    <location>
        <begin position="478"/>
        <end position="480"/>
    </location>
</feature>
<feature type="repeat" description="2-3">
    <location>
        <begin position="485"/>
        <end position="488"/>
    </location>
</feature>
<feature type="repeat" description="1-4">
    <location>
        <begin position="498"/>
        <end position="500"/>
    </location>
</feature>
<feature type="repeat" description="1-5">
    <location>
        <begin position="526"/>
        <end position="528"/>
    </location>
</feature>
<feature type="repeat" description="1-6">
    <location>
        <begin position="539"/>
        <end position="541"/>
    </location>
</feature>
<feature type="repeat" description="1-7">
    <location>
        <begin position="554"/>
        <end position="556"/>
    </location>
</feature>
<feature type="repeat" description="1-8">
    <location>
        <begin position="557"/>
        <end position="559"/>
    </location>
</feature>
<feature type="region of interest" description="Interaction with APOBEC1">
    <location>
        <begin position="400"/>
        <end position="561"/>
    </location>
</feature>
<feature type="region of interest" description="8 X 3 AA repeats of R-G-G">
    <location>
        <begin position="448"/>
        <end position="559"/>
    </location>
</feature>
<feature type="region of interest" description="3 X 4 AA repeats of Y-Y-G-Y">
    <location>
        <begin position="460"/>
        <end position="488"/>
    </location>
</feature>
<feature type="region of interest" description="Disordered" evidence="6">
    <location>
        <begin position="497"/>
        <end position="623"/>
    </location>
</feature>
<feature type="region of interest" description="Interaction with SMN" evidence="10">
    <location>
        <begin position="518"/>
        <end position="549"/>
    </location>
</feature>
<feature type="short sequence motif" description="Bipartite nuclear localization signal" evidence="4">
    <location>
        <begin position="564"/>
        <end position="578"/>
    </location>
</feature>
<feature type="compositionally biased region" description="Low complexity" evidence="6">
    <location>
        <begin position="504"/>
        <end position="522"/>
    </location>
</feature>
<feature type="compositionally biased region" description="Gly residues" evidence="6">
    <location>
        <begin position="550"/>
        <end position="562"/>
    </location>
</feature>
<feature type="compositionally biased region" description="Polar residues" evidence="6">
    <location>
        <begin position="580"/>
        <end position="595"/>
    </location>
</feature>
<feature type="compositionally biased region" description="Polar residues" evidence="6">
    <location>
        <begin position="611"/>
        <end position="623"/>
    </location>
</feature>
<feature type="modified residue" description="N-acetylalanine" evidence="30">
    <location>
        <position position="2"/>
    </location>
</feature>
<feature type="modified residue" description="Phosphoserine" evidence="32">
    <location>
        <position position="159"/>
    </location>
</feature>
<feature type="modified residue" description="N6-acetyllysine" evidence="31">
    <location>
        <position position="221"/>
    </location>
</feature>
<feature type="modified residue" description="N6-acetyllysine" evidence="31">
    <location>
        <position position="363"/>
    </location>
</feature>
<feature type="modified residue" description="Phosphotyrosine" evidence="13">
    <location>
        <position position="373"/>
    </location>
</feature>
<feature type="modified residue" description="Asymmetric dimethylarginine; by PRMT1; alternate" evidence="21">
    <location>
        <position position="444"/>
    </location>
</feature>
<feature type="modified residue" description="Omega-N-methylarginine; by PRMT1; alternate" evidence="21">
    <location>
        <position position="444"/>
    </location>
</feature>
<feature type="modified residue" description="Omega-N-methylarginine; by PRMT1" evidence="21">
    <location>
        <position position="496"/>
    </location>
</feature>
<feature type="modified residue" description="Asymmetric dimethylarginine; by PRMT1" evidence="21">
    <location>
        <position position="510"/>
    </location>
</feature>
<feature type="modified residue" description="Asymmetric dimethylarginine; by PRMT1; alternate" evidence="21">
    <location>
        <position position="518"/>
    </location>
</feature>
<feature type="modified residue" description="Omega-N-methylarginine; by PRMT1; alternate" evidence="21">
    <location>
        <position position="518"/>
    </location>
</feature>
<feature type="modified residue" description="Asymmetric dimethylarginine; by PRMT1; alternate" evidence="21">
    <location>
        <position position="526"/>
    </location>
</feature>
<feature type="modified residue" description="Omega-N-methylarginine; by PRMT1; alternate" evidence="21">
    <location>
        <position position="526"/>
    </location>
</feature>
<feature type="modified residue" description="Asymmetric dimethylarginine; by PRMT1; alternate" evidence="21">
    <location>
        <position position="536"/>
    </location>
</feature>
<feature type="modified residue" description="Omega-N-methylarginine; by PRMT1; alternate" evidence="21">
    <location>
        <position position="536"/>
    </location>
</feature>
<feature type="modified residue" description="Asymmetric dimethylarginine; by PRMT1; alternate" evidence="21">
    <location>
        <position position="539"/>
    </location>
</feature>
<feature type="modified residue" description="Omega-N-methylarginine; by PRMT1; alternate" evidence="21">
    <location>
        <position position="539"/>
    </location>
</feature>
<feature type="modified residue" description="Phosphoserine" evidence="29">
    <location>
        <position position="587"/>
    </location>
</feature>
<feature type="cross-link" description="Glycyl lysine isopeptide (Lys-Gly) (interchain with G-Cter in SUMO2)" evidence="33">
    <location>
        <position position="168"/>
    </location>
</feature>
<feature type="cross-link" description="Glycyl lysine isopeptide (Lys-Gly) (interchain with G-Cter in SUMO2)" evidence="33">
    <location>
        <position position="607"/>
    </location>
</feature>
<feature type="splice variant" id="VSP_009581" description="In isoform 5." evidence="26">
    <location>
        <begin position="1"/>
        <end position="152"/>
    </location>
</feature>
<feature type="splice variant" id="VSP_009582" description="In isoform 5." evidence="26">
    <original>YSGQQPSVGTE</original>
    <variation>MEDHLQIPFIQ</variation>
    <location>
        <begin position="153"/>
        <end position="163"/>
    </location>
</feature>
<feature type="splice variant" id="VSP_009583" description="In isoform 2 and isoform 4." evidence="25 26">
    <location>
        <begin position="302"/>
        <end position="336"/>
    </location>
</feature>
<feature type="splice variant" id="VSP_009584" description="In isoform 3, isoform 4 and isoform 5." evidence="25 26 27">
    <original>VRGARGGRGGNVGGKRKADGYNQPDSKRRQTNNQNWGSQPIAQQPLQGGDHSGNYGYKSENQEFYQDTFGQQWK</original>
    <variation>QGKGVEAGPDLLQ</variation>
    <location>
        <begin position="550"/>
        <end position="623"/>
    </location>
</feature>
<feature type="sequence conflict" description="In Ref. 1; AAD38198." evidence="28" ref="1">
    <original>K</original>
    <variation>Q</variation>
    <location>
        <position position="265"/>
    </location>
</feature>
<feature type="sequence conflict" description="In Ref. 2 and 3." evidence="28" ref="2 3">
    <original>G</original>
    <variation>S</variation>
    <location>
        <position position="287"/>
    </location>
</feature>
<feature type="sequence conflict" description="In Ref. 7; AAH40844." evidence="28" ref="7">
    <original>F</original>
    <variation>S</variation>
    <location>
        <position position="288"/>
    </location>
</feature>
<feature type="helix" evidence="35">
    <location>
        <begin position="25"/>
        <end position="32"/>
    </location>
</feature>
<feature type="helix" evidence="35">
    <location>
        <begin position="37"/>
        <end position="48"/>
    </location>
</feature>
<feature type="helix" evidence="35">
    <location>
        <begin position="59"/>
        <end position="66"/>
    </location>
</feature>
<feature type="helix" evidence="35">
    <location>
        <begin position="70"/>
        <end position="81"/>
    </location>
</feature>
<feature type="helix" evidence="35">
    <location>
        <begin position="91"/>
        <end position="103"/>
    </location>
</feature>
<feature type="strand" evidence="36">
    <location>
        <begin position="244"/>
        <end position="248"/>
    </location>
</feature>
<feature type="helix" evidence="36">
    <location>
        <begin position="256"/>
        <end position="266"/>
    </location>
</feature>
<feature type="strand" evidence="36">
    <location>
        <begin position="267"/>
        <end position="274"/>
    </location>
</feature>
<feature type="strand" evidence="36">
    <location>
        <begin position="289"/>
        <end position="295"/>
    </location>
</feature>
<feature type="helix" evidence="36">
    <location>
        <begin position="296"/>
        <end position="307"/>
    </location>
</feature>
<feature type="helix" evidence="36">
    <location>
        <begin position="314"/>
        <end position="316"/>
    </location>
</feature>
<feature type="strand" evidence="36">
    <location>
        <begin position="320"/>
        <end position="322"/>
    </location>
</feature>
<feature type="turn" evidence="36">
    <location>
        <begin position="325"/>
        <end position="327"/>
    </location>
</feature>
<feature type="strand" evidence="36">
    <location>
        <begin position="339"/>
        <end position="343"/>
    </location>
</feature>
<feature type="helix" evidence="36">
    <location>
        <begin position="351"/>
        <end position="359"/>
    </location>
</feature>
<feature type="strand" evidence="36">
    <location>
        <begin position="364"/>
        <end position="369"/>
    </location>
</feature>
<feature type="strand" evidence="36">
    <location>
        <begin position="371"/>
        <end position="380"/>
    </location>
</feature>
<feature type="helix" evidence="36">
    <location>
        <begin position="381"/>
        <end position="391"/>
    </location>
</feature>
<feature type="strand" evidence="34">
    <location>
        <begin position="394"/>
        <end position="396"/>
    </location>
</feature>
<feature type="strand" evidence="36">
    <location>
        <begin position="402"/>
        <end position="405"/>
    </location>
</feature>
<feature type="sequence conflict" description="In Ref. 5; AAK59705." evidence="28" ref="5">
    <original>QG</original>
    <variation>V</variation>
    <location sequence="O60506-3">
        <begin position="550"/>
        <end position="551"/>
    </location>
</feature>
<name>HNRPQ_HUMAN</name>